<sequence length="154" mass="17504">MPKVAVGGTFQYLHDGHARLIEKAFEIAGSGKVYIGLTSDEMLQKNHSVESYKIRRSRLLEYIKKMGVPEEKYEVTRLNDPCGPTIEEDFDHIIVSPETYPVALKINTIREKKGKKPLEIVYVEYVMAEDGIPISSTRISKGEIDRHGRLKKEA</sequence>
<comment type="function">
    <text evidence="1">Reversibly transfers an adenylyl group from ATP to 4'-phosphopantetheine, yielding dephospho-CoA (dPCoA) and pyrophosphate.</text>
</comment>
<comment type="catalytic activity">
    <reaction evidence="1">
        <text>(R)-4'-phosphopantetheine + ATP + H(+) = 3'-dephospho-CoA + diphosphate</text>
        <dbReference type="Rhea" id="RHEA:19801"/>
        <dbReference type="ChEBI" id="CHEBI:15378"/>
        <dbReference type="ChEBI" id="CHEBI:30616"/>
        <dbReference type="ChEBI" id="CHEBI:33019"/>
        <dbReference type="ChEBI" id="CHEBI:57328"/>
        <dbReference type="ChEBI" id="CHEBI:61723"/>
        <dbReference type="EC" id="2.7.7.3"/>
    </reaction>
</comment>
<comment type="pathway">
    <text evidence="1">Cofactor biosynthesis; coenzyme A biosynthesis.</text>
</comment>
<comment type="subcellular location">
    <subcellularLocation>
        <location evidence="1">Cytoplasm</location>
    </subcellularLocation>
</comment>
<comment type="similarity">
    <text evidence="1">Belongs to the eukaryotic CoaD family.</text>
</comment>
<keyword id="KW-0067">ATP-binding</keyword>
<keyword id="KW-0173">Coenzyme A biosynthesis</keyword>
<keyword id="KW-0963">Cytoplasm</keyword>
<keyword id="KW-0547">Nucleotide-binding</keyword>
<keyword id="KW-0548">Nucleotidyltransferase</keyword>
<keyword id="KW-0808">Transferase</keyword>
<gene>
    <name evidence="1" type="primary">coaD</name>
    <name type="ordered locus">MM_0458</name>
</gene>
<feature type="chain" id="PRO_0000156322" description="Phosphopantetheine adenylyltransferase">
    <location>
        <begin position="1"/>
        <end position="154"/>
    </location>
</feature>
<protein>
    <recommendedName>
        <fullName evidence="1">Phosphopantetheine adenylyltransferase</fullName>
        <ecNumber evidence="1">2.7.7.3</ecNumber>
    </recommendedName>
    <alternativeName>
        <fullName evidence="1">Dephospho-CoA pyrophosphorylase</fullName>
    </alternativeName>
    <alternativeName>
        <fullName evidence="1">Pantetheine-phosphate adenylyltransferase</fullName>
        <shortName evidence="1">PPAT</shortName>
    </alternativeName>
</protein>
<accession>Q8PZN4</accession>
<dbReference type="EC" id="2.7.7.3" evidence="1"/>
<dbReference type="EMBL" id="AE008384">
    <property type="protein sequence ID" value="AAM30154.1"/>
    <property type="molecule type" value="Genomic_DNA"/>
</dbReference>
<dbReference type="RefSeq" id="WP_011032411.1">
    <property type="nucleotide sequence ID" value="NC_003901.1"/>
</dbReference>
<dbReference type="SMR" id="Q8PZN4"/>
<dbReference type="KEGG" id="mma:MM_0458"/>
<dbReference type="PATRIC" id="fig|192952.21.peg.553"/>
<dbReference type="eggNOG" id="arCOG01223">
    <property type="taxonomic scope" value="Archaea"/>
</dbReference>
<dbReference type="HOGENOM" id="CLU_035272_5_0_2"/>
<dbReference type="UniPathway" id="UPA00241"/>
<dbReference type="Proteomes" id="UP000000595">
    <property type="component" value="Chromosome"/>
</dbReference>
<dbReference type="GO" id="GO:0005737">
    <property type="term" value="C:cytoplasm"/>
    <property type="evidence" value="ECO:0007669"/>
    <property type="project" value="UniProtKB-SubCell"/>
</dbReference>
<dbReference type="GO" id="GO:0005524">
    <property type="term" value="F:ATP binding"/>
    <property type="evidence" value="ECO:0007669"/>
    <property type="project" value="UniProtKB-KW"/>
</dbReference>
<dbReference type="GO" id="GO:0004595">
    <property type="term" value="F:pantetheine-phosphate adenylyltransferase activity"/>
    <property type="evidence" value="ECO:0007669"/>
    <property type="project" value="UniProtKB-UniRule"/>
</dbReference>
<dbReference type="GO" id="GO:0015937">
    <property type="term" value="P:coenzyme A biosynthetic process"/>
    <property type="evidence" value="ECO:0007669"/>
    <property type="project" value="UniProtKB-UniRule"/>
</dbReference>
<dbReference type="CDD" id="cd02164">
    <property type="entry name" value="PPAT_CoAS"/>
    <property type="match status" value="1"/>
</dbReference>
<dbReference type="Gene3D" id="3.40.50.620">
    <property type="entry name" value="HUPs"/>
    <property type="match status" value="1"/>
</dbReference>
<dbReference type="HAMAP" id="MF_00647">
    <property type="entry name" value="PPAT_arch"/>
    <property type="match status" value="1"/>
</dbReference>
<dbReference type="InterPro" id="IPR004821">
    <property type="entry name" value="Cyt_trans-like"/>
</dbReference>
<dbReference type="InterPro" id="IPR023540">
    <property type="entry name" value="PPAT_arch"/>
</dbReference>
<dbReference type="InterPro" id="IPR014729">
    <property type="entry name" value="Rossmann-like_a/b/a_fold"/>
</dbReference>
<dbReference type="NCBIfam" id="TIGR00125">
    <property type="entry name" value="cyt_tran_rel"/>
    <property type="match status" value="1"/>
</dbReference>
<dbReference type="NCBIfam" id="NF001985">
    <property type="entry name" value="PRK00777.1"/>
    <property type="match status" value="1"/>
</dbReference>
<dbReference type="Pfam" id="PF01467">
    <property type="entry name" value="CTP_transf_like"/>
    <property type="match status" value="1"/>
</dbReference>
<dbReference type="SUPFAM" id="SSF52374">
    <property type="entry name" value="Nucleotidylyl transferase"/>
    <property type="match status" value="1"/>
</dbReference>
<name>COAD_METMA</name>
<proteinExistence type="inferred from homology"/>
<organism>
    <name type="scientific">Methanosarcina mazei (strain ATCC BAA-159 / DSM 3647 / Goe1 / Go1 / JCM 11833 / OCM 88)</name>
    <name type="common">Methanosarcina frisia</name>
    <dbReference type="NCBI Taxonomy" id="192952"/>
    <lineage>
        <taxon>Archaea</taxon>
        <taxon>Methanobacteriati</taxon>
        <taxon>Methanobacteriota</taxon>
        <taxon>Stenosarchaea group</taxon>
        <taxon>Methanomicrobia</taxon>
        <taxon>Methanosarcinales</taxon>
        <taxon>Methanosarcinaceae</taxon>
        <taxon>Methanosarcina</taxon>
    </lineage>
</organism>
<reference key="1">
    <citation type="journal article" date="2002" name="J. Mol. Microbiol. Biotechnol.">
        <title>The genome of Methanosarcina mazei: evidence for lateral gene transfer between Bacteria and Archaea.</title>
        <authorList>
            <person name="Deppenmeier U."/>
            <person name="Johann A."/>
            <person name="Hartsch T."/>
            <person name="Merkl R."/>
            <person name="Schmitz R.A."/>
            <person name="Martinez-Arias R."/>
            <person name="Henne A."/>
            <person name="Wiezer A."/>
            <person name="Baeumer S."/>
            <person name="Jacobi C."/>
            <person name="Brueggemann H."/>
            <person name="Lienard T."/>
            <person name="Christmann A."/>
            <person name="Boemecke M."/>
            <person name="Steckel S."/>
            <person name="Bhattacharyya A."/>
            <person name="Lykidis A."/>
            <person name="Overbeek R."/>
            <person name="Klenk H.-P."/>
            <person name="Gunsalus R.P."/>
            <person name="Fritz H.-J."/>
            <person name="Gottschalk G."/>
        </authorList>
    </citation>
    <scope>NUCLEOTIDE SEQUENCE [LARGE SCALE GENOMIC DNA]</scope>
    <source>
        <strain>ATCC BAA-159 / DSM 3647 / Goe1 / Go1 / JCM 11833 / OCM 88</strain>
    </source>
</reference>
<evidence type="ECO:0000255" key="1">
    <source>
        <dbReference type="HAMAP-Rule" id="MF_00647"/>
    </source>
</evidence>